<organism>
    <name type="scientific">Burkholderia orbicola (strain AU 1054)</name>
    <dbReference type="NCBI Taxonomy" id="331271"/>
    <lineage>
        <taxon>Bacteria</taxon>
        <taxon>Pseudomonadati</taxon>
        <taxon>Pseudomonadota</taxon>
        <taxon>Betaproteobacteria</taxon>
        <taxon>Burkholderiales</taxon>
        <taxon>Burkholderiaceae</taxon>
        <taxon>Burkholderia</taxon>
        <taxon>Burkholderia cepacia complex</taxon>
        <taxon>Burkholderia orbicola</taxon>
    </lineage>
</organism>
<gene>
    <name evidence="1" type="primary">xylG</name>
    <name type="ordered locus">Bcen_6503</name>
</gene>
<dbReference type="EC" id="7.5.2.10" evidence="1"/>
<dbReference type="EMBL" id="CP000380">
    <property type="protein sequence ID" value="ABF81362.1"/>
    <property type="molecule type" value="Genomic_DNA"/>
</dbReference>
<dbReference type="SMR" id="Q1BG93"/>
<dbReference type="HOGENOM" id="CLU_000604_92_3_4"/>
<dbReference type="GO" id="GO:0005886">
    <property type="term" value="C:plasma membrane"/>
    <property type="evidence" value="ECO:0007669"/>
    <property type="project" value="UniProtKB-SubCell"/>
</dbReference>
<dbReference type="GO" id="GO:0015614">
    <property type="term" value="F:ABC-type D-xylose transporter activity"/>
    <property type="evidence" value="ECO:0007669"/>
    <property type="project" value="UniProtKB-EC"/>
</dbReference>
<dbReference type="GO" id="GO:0005524">
    <property type="term" value="F:ATP binding"/>
    <property type="evidence" value="ECO:0007669"/>
    <property type="project" value="UniProtKB-KW"/>
</dbReference>
<dbReference type="GO" id="GO:0016887">
    <property type="term" value="F:ATP hydrolysis activity"/>
    <property type="evidence" value="ECO:0007669"/>
    <property type="project" value="InterPro"/>
</dbReference>
<dbReference type="CDD" id="cd03216">
    <property type="entry name" value="ABC_Carb_Monos_I"/>
    <property type="match status" value="1"/>
</dbReference>
<dbReference type="CDD" id="cd03215">
    <property type="entry name" value="ABC_Carb_Monos_II"/>
    <property type="match status" value="1"/>
</dbReference>
<dbReference type="FunFam" id="3.40.50.300:FF:000127">
    <property type="entry name" value="Ribose import ATP-binding protein RbsA"/>
    <property type="match status" value="1"/>
</dbReference>
<dbReference type="Gene3D" id="3.40.50.300">
    <property type="entry name" value="P-loop containing nucleotide triphosphate hydrolases"/>
    <property type="match status" value="2"/>
</dbReference>
<dbReference type="InterPro" id="IPR003593">
    <property type="entry name" value="AAA+_ATPase"/>
</dbReference>
<dbReference type="InterPro" id="IPR050107">
    <property type="entry name" value="ABC_carbohydrate_import_ATPase"/>
</dbReference>
<dbReference type="InterPro" id="IPR003439">
    <property type="entry name" value="ABC_transporter-like_ATP-bd"/>
</dbReference>
<dbReference type="InterPro" id="IPR017871">
    <property type="entry name" value="ABC_transporter-like_CS"/>
</dbReference>
<dbReference type="InterPro" id="IPR013455">
    <property type="entry name" value="ABC_transptr_XylG"/>
</dbReference>
<dbReference type="InterPro" id="IPR027417">
    <property type="entry name" value="P-loop_NTPase"/>
</dbReference>
<dbReference type="NCBIfam" id="NF010069">
    <property type="entry name" value="PRK13549.1"/>
    <property type="match status" value="1"/>
</dbReference>
<dbReference type="NCBIfam" id="TIGR02633">
    <property type="entry name" value="xylG"/>
    <property type="match status" value="1"/>
</dbReference>
<dbReference type="PANTHER" id="PTHR43790">
    <property type="entry name" value="CARBOHYDRATE TRANSPORT ATP-BINDING PROTEIN MG119-RELATED"/>
    <property type="match status" value="1"/>
</dbReference>
<dbReference type="PANTHER" id="PTHR43790:SF1">
    <property type="entry name" value="XYLOSE IMPORT ATP-BINDING PROTEIN XYLG"/>
    <property type="match status" value="1"/>
</dbReference>
<dbReference type="Pfam" id="PF00005">
    <property type="entry name" value="ABC_tran"/>
    <property type="match status" value="2"/>
</dbReference>
<dbReference type="SMART" id="SM00382">
    <property type="entry name" value="AAA"/>
    <property type="match status" value="2"/>
</dbReference>
<dbReference type="SUPFAM" id="SSF52540">
    <property type="entry name" value="P-loop containing nucleoside triphosphate hydrolases"/>
    <property type="match status" value="2"/>
</dbReference>
<dbReference type="PROSITE" id="PS00211">
    <property type="entry name" value="ABC_TRANSPORTER_1"/>
    <property type="match status" value="1"/>
</dbReference>
<dbReference type="PROSITE" id="PS50893">
    <property type="entry name" value="ABC_TRANSPORTER_2"/>
    <property type="match status" value="2"/>
</dbReference>
<dbReference type="PROSITE" id="PS51280">
    <property type="entry name" value="XYLG"/>
    <property type="match status" value="1"/>
</dbReference>
<feature type="chain" id="PRO_0000271497" description="Xylose import ATP-binding protein XylG">
    <location>
        <begin position="1"/>
        <end position="519"/>
    </location>
</feature>
<feature type="domain" description="ABC transporter 1" evidence="1">
    <location>
        <begin position="6"/>
        <end position="245"/>
    </location>
</feature>
<feature type="domain" description="ABC transporter 2" evidence="1">
    <location>
        <begin position="262"/>
        <end position="507"/>
    </location>
</feature>
<feature type="binding site" evidence="1">
    <location>
        <begin position="38"/>
        <end position="45"/>
    </location>
    <ligand>
        <name>ATP</name>
        <dbReference type="ChEBI" id="CHEBI:30616"/>
    </ligand>
</feature>
<proteinExistence type="inferred from homology"/>
<sequence length="519" mass="55855">MTEPLLTMRGIVKAFDGVKALDGIDLTVRPGECVGLCGENGAGKSTLMKVLSGVYPHGTWDGEIRWEGAPLAASGVRDTERAGIVIIHQELMLVPELSVAENIFLGNEITLPGGRMNFAAMVQRAEELLRELRIDTINVAQPVMNYGGGHQQLIEIAKALNKHAKLLILDEPSSSLSASETRILLDIVRDLKRRGVACVYISHKLDEVAAVCDTVTVIRDGRHVATEPMATLTTDRIIAMMVGREIRDLYPREPHEIGDVVLDVRHVTCRDVTNARRKRVDDVSFSVRRGEIVGVAGLVGAGRTELMQAIFGAYPGACTASVTMNGKPLSIRSPADAIRAGIAMVPEDRKRHGIVPQLGVGHNITLAVLRRFAARGRIDAAAELDTIRTEMQRLSVRAAHPFLSIASLSGGNQQKAVLAKMLLTEPQVLILDEPTRGVDVGAKAEIYRLIFALAQRGVALIVVSSELPEVLGLADRVLVIGEGELRGDFVNQGLTQEQILGAALKPARLAAEPTAASAT</sequence>
<keyword id="KW-0067">ATP-binding</keyword>
<keyword id="KW-0997">Cell inner membrane</keyword>
<keyword id="KW-1003">Cell membrane</keyword>
<keyword id="KW-0472">Membrane</keyword>
<keyword id="KW-0547">Nucleotide-binding</keyword>
<keyword id="KW-0677">Repeat</keyword>
<keyword id="KW-0762">Sugar transport</keyword>
<keyword id="KW-1278">Translocase</keyword>
<keyword id="KW-0813">Transport</keyword>
<comment type="function">
    <text evidence="1">Part of the ABC transporter complex XylFGH involved in xylose import. Responsible for energy coupling to the transport system.</text>
</comment>
<comment type="catalytic activity">
    <reaction evidence="1">
        <text>D-xylose(out) + ATP + H2O = D-xylose(in) + ADP + phosphate + H(+)</text>
        <dbReference type="Rhea" id="RHEA:29899"/>
        <dbReference type="ChEBI" id="CHEBI:15377"/>
        <dbReference type="ChEBI" id="CHEBI:15378"/>
        <dbReference type="ChEBI" id="CHEBI:30616"/>
        <dbReference type="ChEBI" id="CHEBI:43474"/>
        <dbReference type="ChEBI" id="CHEBI:53455"/>
        <dbReference type="ChEBI" id="CHEBI:456216"/>
        <dbReference type="EC" id="7.5.2.10"/>
    </reaction>
</comment>
<comment type="subunit">
    <text evidence="1">The complex is composed of two ATP-binding proteins (XylG), two transmembrane proteins (XylH) and a solute-binding protein (XylF).</text>
</comment>
<comment type="subcellular location">
    <subcellularLocation>
        <location evidence="1">Cell inner membrane</location>
        <topology evidence="1">Peripheral membrane protein</topology>
    </subcellularLocation>
</comment>
<comment type="similarity">
    <text evidence="1">Belongs to the ABC transporter superfamily. Xylose importer (TC 3.A.1.2.4) family.</text>
</comment>
<accession>Q1BG93</accession>
<evidence type="ECO:0000255" key="1">
    <source>
        <dbReference type="HAMAP-Rule" id="MF_01722"/>
    </source>
</evidence>
<protein>
    <recommendedName>
        <fullName evidence="1">Xylose import ATP-binding protein XylG</fullName>
        <ecNumber evidence="1">7.5.2.10</ecNumber>
    </recommendedName>
</protein>
<name>XYLG_BURO1</name>
<reference key="1">
    <citation type="submission" date="2006-05" db="EMBL/GenBank/DDBJ databases">
        <title>Complete sequence of chromosome 3 of Burkholderia cenocepacia AU 1054.</title>
        <authorList>
            <consortium name="US DOE Joint Genome Institute"/>
            <person name="Copeland A."/>
            <person name="Lucas S."/>
            <person name="Lapidus A."/>
            <person name="Barry K."/>
            <person name="Detter J.C."/>
            <person name="Glavina del Rio T."/>
            <person name="Hammon N."/>
            <person name="Israni S."/>
            <person name="Dalin E."/>
            <person name="Tice H."/>
            <person name="Pitluck S."/>
            <person name="Chain P."/>
            <person name="Malfatti S."/>
            <person name="Shin M."/>
            <person name="Vergez L."/>
            <person name="Schmutz J."/>
            <person name="Larimer F."/>
            <person name="Land M."/>
            <person name="Hauser L."/>
            <person name="Kyrpides N."/>
            <person name="Lykidis A."/>
            <person name="LiPuma J.J."/>
            <person name="Konstantinidis K."/>
            <person name="Tiedje J.M."/>
            <person name="Richardson P."/>
        </authorList>
    </citation>
    <scope>NUCLEOTIDE SEQUENCE [LARGE SCALE GENOMIC DNA]</scope>
    <source>
        <strain>AU 1054</strain>
    </source>
</reference>